<organism>
    <name type="scientific">Prochlorococcus marinus subsp. pastoris (strain CCMP1986 / NIES-2087 / MED4)</name>
    <dbReference type="NCBI Taxonomy" id="59919"/>
    <lineage>
        <taxon>Bacteria</taxon>
        <taxon>Bacillati</taxon>
        <taxon>Cyanobacteriota</taxon>
        <taxon>Cyanophyceae</taxon>
        <taxon>Synechococcales</taxon>
        <taxon>Prochlorococcaceae</taxon>
        <taxon>Prochlorococcus</taxon>
    </lineage>
</organism>
<evidence type="ECO:0000255" key="1">
    <source>
        <dbReference type="HAMAP-Rule" id="MF_00828"/>
    </source>
</evidence>
<reference key="1">
    <citation type="journal article" date="2003" name="Nature">
        <title>Genome divergence in two Prochlorococcus ecotypes reflects oceanic niche differentiation.</title>
        <authorList>
            <person name="Rocap G."/>
            <person name="Larimer F.W."/>
            <person name="Lamerdin J.E."/>
            <person name="Malfatti S."/>
            <person name="Chain P."/>
            <person name="Ahlgren N.A."/>
            <person name="Arellano A."/>
            <person name="Coleman M."/>
            <person name="Hauser L."/>
            <person name="Hess W.R."/>
            <person name="Johnson Z.I."/>
            <person name="Land M.L."/>
            <person name="Lindell D."/>
            <person name="Post A.F."/>
            <person name="Regala W."/>
            <person name="Shah M."/>
            <person name="Shaw S.L."/>
            <person name="Steglich C."/>
            <person name="Sullivan M.B."/>
            <person name="Ting C.S."/>
            <person name="Tolonen A."/>
            <person name="Webb E.A."/>
            <person name="Zinser E.R."/>
            <person name="Chisholm S.W."/>
        </authorList>
    </citation>
    <scope>NUCLEOTIDE SEQUENCE [LARGE SCALE GENOMIC DNA]</scope>
    <source>
        <strain>CCMP1986 / NIES-2087 / MED4</strain>
    </source>
</reference>
<proteinExistence type="inferred from homology"/>
<accession>Q7V2E0</accession>
<keyword id="KW-0472">Membrane</keyword>
<keyword id="KW-0602">Photosynthesis</keyword>
<keyword id="KW-0603">Photosystem I</keyword>
<keyword id="KW-0793">Thylakoid</keyword>
<keyword id="KW-0812">Transmembrane</keyword>
<keyword id="KW-1133">Transmembrane helix</keyword>
<comment type="subcellular location">
    <subcellularLocation>
        <location evidence="1">Cellular thylakoid membrane</location>
        <topology evidence="1">Single-pass membrane protein</topology>
    </subcellularLocation>
</comment>
<comment type="similarity">
    <text evidence="1">Belongs to the PsaM family.</text>
</comment>
<gene>
    <name evidence="1" type="primary">psaM</name>
    <name type="ordered locus">PMM0540</name>
</gene>
<name>PSAM_PROMP</name>
<dbReference type="EMBL" id="BX548174">
    <property type="protein sequence ID" value="CAE18999.1"/>
    <property type="molecule type" value="Genomic_DNA"/>
</dbReference>
<dbReference type="RefSeq" id="WP_011132175.1">
    <property type="nucleotide sequence ID" value="NC_005072.1"/>
</dbReference>
<dbReference type="SMR" id="Q7V2E0"/>
<dbReference type="STRING" id="59919.PMM0540"/>
<dbReference type="KEGG" id="pmm:PMM0540"/>
<dbReference type="HOGENOM" id="CLU_218031_0_0_3"/>
<dbReference type="OrthoDB" id="542072at2"/>
<dbReference type="Proteomes" id="UP000001026">
    <property type="component" value="Chromosome"/>
</dbReference>
<dbReference type="GO" id="GO:0009522">
    <property type="term" value="C:photosystem I"/>
    <property type="evidence" value="ECO:0007669"/>
    <property type="project" value="UniProtKB-KW"/>
</dbReference>
<dbReference type="GO" id="GO:0031676">
    <property type="term" value="C:plasma membrane-derived thylakoid membrane"/>
    <property type="evidence" value="ECO:0007669"/>
    <property type="project" value="UniProtKB-SubCell"/>
</dbReference>
<dbReference type="GO" id="GO:0015979">
    <property type="term" value="P:photosynthesis"/>
    <property type="evidence" value="ECO:0007669"/>
    <property type="project" value="UniProtKB-UniRule"/>
</dbReference>
<dbReference type="HAMAP" id="MF_00828">
    <property type="entry name" value="PSI_PsaM"/>
    <property type="match status" value="1"/>
</dbReference>
<dbReference type="InterPro" id="IPR010010">
    <property type="entry name" value="PSI_PsaM"/>
</dbReference>
<dbReference type="NCBIfam" id="TIGR03053">
    <property type="entry name" value="PS_I_psaM"/>
    <property type="match status" value="1"/>
</dbReference>
<protein>
    <recommendedName>
        <fullName evidence="1">Photosystem I reaction center subunit XII</fullName>
    </recommendedName>
    <alternativeName>
        <fullName evidence="1">PSI-M</fullName>
    </alternativeName>
</protein>
<sequence length="34" mass="3600">MEPSQSINLIILGLIVVMHAGVLALRLGISLART</sequence>
<feature type="chain" id="PRO_1000062715" description="Photosystem I reaction center subunit XII">
    <location>
        <begin position="1"/>
        <end position="34"/>
    </location>
</feature>
<feature type="transmembrane region" description="Helical" evidence="1">
    <location>
        <begin position="9"/>
        <end position="29"/>
    </location>
</feature>